<protein>
    <recommendedName>
        <fullName evidence="1">Large ribosomal subunit protein eL24</fullName>
    </recommendedName>
    <alternativeName>
        <fullName evidence="2">50S ribosomal protein L24e</fullName>
    </alternativeName>
</protein>
<gene>
    <name evidence="1" type="primary">rpl24e</name>
    <name type="ordered locus">TSIB_0421</name>
</gene>
<reference key="1">
    <citation type="journal article" date="2009" name="Appl. Environ. Microbiol.">
        <title>Metabolic versatility and indigenous origin of the archaeon Thermococcus sibiricus, isolated from a siberian oil reservoir, as revealed by genome analysis.</title>
        <authorList>
            <person name="Mardanov A.V."/>
            <person name="Ravin N.V."/>
            <person name="Svetlitchnyi V.A."/>
            <person name="Beletsky A.V."/>
            <person name="Miroshnichenko M.L."/>
            <person name="Bonch-Osmolovskaya E.A."/>
            <person name="Skryabin K.G."/>
        </authorList>
    </citation>
    <scope>NUCLEOTIDE SEQUENCE [LARGE SCALE GENOMIC DNA]</scope>
    <source>
        <strain>DSM 12597 / MM 739</strain>
    </source>
</reference>
<dbReference type="EMBL" id="CP001463">
    <property type="protein sequence ID" value="ACS89487.1"/>
    <property type="molecule type" value="Genomic_DNA"/>
</dbReference>
<dbReference type="RefSeq" id="WP_015848707.1">
    <property type="nucleotide sequence ID" value="NC_012883.1"/>
</dbReference>
<dbReference type="SMR" id="C6A1J2"/>
<dbReference type="STRING" id="604354.TSIB_0421"/>
<dbReference type="GeneID" id="8095407"/>
<dbReference type="KEGG" id="tsi:TSIB_0421"/>
<dbReference type="eggNOG" id="arCOG01950">
    <property type="taxonomic scope" value="Archaea"/>
</dbReference>
<dbReference type="HOGENOM" id="CLU_190191_0_0_2"/>
<dbReference type="OrthoDB" id="55506at2157"/>
<dbReference type="Proteomes" id="UP000009079">
    <property type="component" value="Chromosome"/>
</dbReference>
<dbReference type="GO" id="GO:1990904">
    <property type="term" value="C:ribonucleoprotein complex"/>
    <property type="evidence" value="ECO:0007669"/>
    <property type="project" value="UniProtKB-KW"/>
</dbReference>
<dbReference type="GO" id="GO:0005840">
    <property type="term" value="C:ribosome"/>
    <property type="evidence" value="ECO:0007669"/>
    <property type="project" value="UniProtKB-KW"/>
</dbReference>
<dbReference type="GO" id="GO:0019843">
    <property type="term" value="F:rRNA binding"/>
    <property type="evidence" value="ECO:0007669"/>
    <property type="project" value="UniProtKB-UniRule"/>
</dbReference>
<dbReference type="GO" id="GO:0003735">
    <property type="term" value="F:structural constituent of ribosome"/>
    <property type="evidence" value="ECO:0007669"/>
    <property type="project" value="InterPro"/>
</dbReference>
<dbReference type="GO" id="GO:0008270">
    <property type="term" value="F:zinc ion binding"/>
    <property type="evidence" value="ECO:0007669"/>
    <property type="project" value="UniProtKB-UniRule"/>
</dbReference>
<dbReference type="GO" id="GO:0006412">
    <property type="term" value="P:translation"/>
    <property type="evidence" value="ECO:0007669"/>
    <property type="project" value="UniProtKB-UniRule"/>
</dbReference>
<dbReference type="CDD" id="cd00472">
    <property type="entry name" value="Ribosomal_L24e_L24"/>
    <property type="match status" value="1"/>
</dbReference>
<dbReference type="FunFam" id="2.30.170.20:FF:000001">
    <property type="entry name" value="probable ribosome biogenesis protein RLP24"/>
    <property type="match status" value="1"/>
</dbReference>
<dbReference type="Gene3D" id="2.30.170.20">
    <property type="entry name" value="Ribosomal protein L24e"/>
    <property type="match status" value="1"/>
</dbReference>
<dbReference type="HAMAP" id="MF_00773">
    <property type="entry name" value="Ribosomal_eL24"/>
    <property type="match status" value="1"/>
</dbReference>
<dbReference type="InterPro" id="IPR038630">
    <property type="entry name" value="L24e/L24_sf"/>
</dbReference>
<dbReference type="InterPro" id="IPR056366">
    <property type="entry name" value="Ribosomal_eL24"/>
</dbReference>
<dbReference type="InterPro" id="IPR055345">
    <property type="entry name" value="Ribosomal_eL24-rel_arc"/>
</dbReference>
<dbReference type="InterPro" id="IPR000988">
    <property type="entry name" value="Ribosomal_eL24-rel_N"/>
</dbReference>
<dbReference type="InterPro" id="IPR023442">
    <property type="entry name" value="Ribosomal_eL24_CS"/>
</dbReference>
<dbReference type="InterPro" id="IPR011017">
    <property type="entry name" value="TRASH_dom"/>
</dbReference>
<dbReference type="NCBIfam" id="NF034186">
    <property type="entry name" value="PRK14891.1-1"/>
    <property type="match status" value="1"/>
</dbReference>
<dbReference type="PANTHER" id="PTHR10792">
    <property type="entry name" value="60S RIBOSOMAL PROTEIN L24"/>
    <property type="match status" value="1"/>
</dbReference>
<dbReference type="PANTHER" id="PTHR10792:SF1">
    <property type="entry name" value="RIBOSOMAL PROTEIN L24"/>
    <property type="match status" value="1"/>
</dbReference>
<dbReference type="Pfam" id="PF01246">
    <property type="entry name" value="Ribosomal_L24e"/>
    <property type="match status" value="1"/>
</dbReference>
<dbReference type="SMART" id="SM00746">
    <property type="entry name" value="TRASH"/>
    <property type="match status" value="1"/>
</dbReference>
<dbReference type="SUPFAM" id="SSF57716">
    <property type="entry name" value="Glucocorticoid receptor-like (DNA-binding domain)"/>
    <property type="match status" value="1"/>
</dbReference>
<dbReference type="PROSITE" id="PS01073">
    <property type="entry name" value="RIBOSOMAL_L24E"/>
    <property type="match status" value="1"/>
</dbReference>
<accession>C6A1J2</accession>
<evidence type="ECO:0000255" key="1">
    <source>
        <dbReference type="HAMAP-Rule" id="MF_00773"/>
    </source>
</evidence>
<evidence type="ECO:0000305" key="2"/>
<keyword id="KW-0479">Metal-binding</keyword>
<keyword id="KW-1185">Reference proteome</keyword>
<keyword id="KW-0687">Ribonucleoprotein</keyword>
<keyword id="KW-0689">Ribosomal protein</keyword>
<keyword id="KW-0694">RNA-binding</keyword>
<keyword id="KW-0699">rRNA-binding</keyword>
<keyword id="KW-0862">Zinc</keyword>
<keyword id="KW-0863">Zinc-finger</keyword>
<proteinExistence type="inferred from homology"/>
<sequence length="67" mass="8159">MARWNVCSYCGKEFEPGTGKMYVRNDGRVYFFCSRKCEKYFFMGRNPRKLKWTKAFEEAKLQRAKRK</sequence>
<comment type="function">
    <text evidence="1">Binds to the 23S rRNA.</text>
</comment>
<comment type="cofactor">
    <cofactor evidence="1">
        <name>Zn(2+)</name>
        <dbReference type="ChEBI" id="CHEBI:29105"/>
    </cofactor>
    <text evidence="1">Binds 1 zinc ion per subunit.</text>
</comment>
<comment type="subunit">
    <text evidence="1">Part of the 50S ribosomal subunit. Forms a cluster with proteins L3 and L14.</text>
</comment>
<comment type="similarity">
    <text evidence="1">Belongs to the eukaryotic ribosomal protein eL24 family.</text>
</comment>
<organism>
    <name type="scientific">Thermococcus sibiricus (strain DSM 12597 / MM 739)</name>
    <dbReference type="NCBI Taxonomy" id="604354"/>
    <lineage>
        <taxon>Archaea</taxon>
        <taxon>Methanobacteriati</taxon>
        <taxon>Methanobacteriota</taxon>
        <taxon>Thermococci</taxon>
        <taxon>Thermococcales</taxon>
        <taxon>Thermococcaceae</taxon>
        <taxon>Thermococcus</taxon>
    </lineage>
</organism>
<name>RL24E_THESM</name>
<feature type="chain" id="PRO_1000212916" description="Large ribosomal subunit protein eL24">
    <location>
        <begin position="1"/>
        <end position="67"/>
    </location>
</feature>
<feature type="zinc finger region" description="C4-type" evidence="1">
    <location>
        <begin position="7"/>
        <end position="37"/>
    </location>
</feature>
<feature type="binding site" evidence="1">
    <location>
        <position position="7"/>
    </location>
    <ligand>
        <name>Zn(2+)</name>
        <dbReference type="ChEBI" id="CHEBI:29105"/>
    </ligand>
</feature>
<feature type="binding site" evidence="1">
    <location>
        <position position="10"/>
    </location>
    <ligand>
        <name>Zn(2+)</name>
        <dbReference type="ChEBI" id="CHEBI:29105"/>
    </ligand>
</feature>
<feature type="binding site" evidence="1">
    <location>
        <position position="33"/>
    </location>
    <ligand>
        <name>Zn(2+)</name>
        <dbReference type="ChEBI" id="CHEBI:29105"/>
    </ligand>
</feature>
<feature type="binding site" evidence="1">
    <location>
        <position position="37"/>
    </location>
    <ligand>
        <name>Zn(2+)</name>
        <dbReference type="ChEBI" id="CHEBI:29105"/>
    </ligand>
</feature>